<feature type="chain" id="PRO_1000087096" description="Large ribosomal subunit protein uL13">
    <location>
        <begin position="1"/>
        <end position="144"/>
    </location>
</feature>
<protein>
    <recommendedName>
        <fullName evidence="1">Large ribosomal subunit protein uL13</fullName>
    </recommendedName>
    <alternativeName>
        <fullName evidence="2">50S ribosomal protein L13</fullName>
    </alternativeName>
</protein>
<comment type="function">
    <text evidence="1">This protein is one of the early assembly proteins of the 50S ribosomal subunit, although it is not seen to bind rRNA by itself. It is important during the early stages of 50S assembly.</text>
</comment>
<comment type="subunit">
    <text evidence="1">Part of the 50S ribosomal subunit.</text>
</comment>
<comment type="similarity">
    <text evidence="1">Belongs to the universal ribosomal protein uL13 family.</text>
</comment>
<accession>A5D5F6</accession>
<reference key="1">
    <citation type="journal article" date="2008" name="Genome Res.">
        <title>The genome of Pelotomaculum thermopropionicum reveals niche-associated evolution in anaerobic microbiota.</title>
        <authorList>
            <person name="Kosaka T."/>
            <person name="Kato S."/>
            <person name="Shimoyama T."/>
            <person name="Ishii S."/>
            <person name="Abe T."/>
            <person name="Watanabe K."/>
        </authorList>
    </citation>
    <scope>NUCLEOTIDE SEQUENCE [LARGE SCALE GENOMIC DNA]</scope>
    <source>
        <strain>DSM 13744 / JCM 10971 / SI</strain>
    </source>
</reference>
<proteinExistence type="inferred from homology"/>
<gene>
    <name evidence="1" type="primary">rplM</name>
    <name type="ordered locus">PTH_0356</name>
</gene>
<organism>
    <name type="scientific">Pelotomaculum thermopropionicum (strain DSM 13744 / JCM 10971 / SI)</name>
    <dbReference type="NCBI Taxonomy" id="370438"/>
    <lineage>
        <taxon>Bacteria</taxon>
        <taxon>Bacillati</taxon>
        <taxon>Bacillota</taxon>
        <taxon>Clostridia</taxon>
        <taxon>Eubacteriales</taxon>
        <taxon>Desulfotomaculaceae</taxon>
        <taxon>Pelotomaculum</taxon>
    </lineage>
</organism>
<keyword id="KW-1185">Reference proteome</keyword>
<keyword id="KW-0687">Ribonucleoprotein</keyword>
<keyword id="KW-0689">Ribosomal protein</keyword>
<dbReference type="EMBL" id="AP009389">
    <property type="protein sequence ID" value="BAF58537.1"/>
    <property type="molecule type" value="Genomic_DNA"/>
</dbReference>
<dbReference type="SMR" id="A5D5F6"/>
<dbReference type="STRING" id="370438.PTH_0356"/>
<dbReference type="KEGG" id="pth:PTH_0356"/>
<dbReference type="eggNOG" id="COG0102">
    <property type="taxonomic scope" value="Bacteria"/>
</dbReference>
<dbReference type="HOGENOM" id="CLU_082184_2_2_9"/>
<dbReference type="Proteomes" id="UP000006556">
    <property type="component" value="Chromosome"/>
</dbReference>
<dbReference type="GO" id="GO:0022625">
    <property type="term" value="C:cytosolic large ribosomal subunit"/>
    <property type="evidence" value="ECO:0007669"/>
    <property type="project" value="TreeGrafter"/>
</dbReference>
<dbReference type="GO" id="GO:0003729">
    <property type="term" value="F:mRNA binding"/>
    <property type="evidence" value="ECO:0007669"/>
    <property type="project" value="TreeGrafter"/>
</dbReference>
<dbReference type="GO" id="GO:0003735">
    <property type="term" value="F:structural constituent of ribosome"/>
    <property type="evidence" value="ECO:0007669"/>
    <property type="project" value="InterPro"/>
</dbReference>
<dbReference type="GO" id="GO:0017148">
    <property type="term" value="P:negative regulation of translation"/>
    <property type="evidence" value="ECO:0007669"/>
    <property type="project" value="TreeGrafter"/>
</dbReference>
<dbReference type="GO" id="GO:0006412">
    <property type="term" value="P:translation"/>
    <property type="evidence" value="ECO:0007669"/>
    <property type="project" value="UniProtKB-UniRule"/>
</dbReference>
<dbReference type="CDD" id="cd00392">
    <property type="entry name" value="Ribosomal_L13"/>
    <property type="match status" value="1"/>
</dbReference>
<dbReference type="FunFam" id="3.90.1180.10:FF:000001">
    <property type="entry name" value="50S ribosomal protein L13"/>
    <property type="match status" value="1"/>
</dbReference>
<dbReference type="Gene3D" id="3.90.1180.10">
    <property type="entry name" value="Ribosomal protein L13"/>
    <property type="match status" value="1"/>
</dbReference>
<dbReference type="HAMAP" id="MF_01366">
    <property type="entry name" value="Ribosomal_uL13"/>
    <property type="match status" value="1"/>
</dbReference>
<dbReference type="InterPro" id="IPR005822">
    <property type="entry name" value="Ribosomal_uL13"/>
</dbReference>
<dbReference type="InterPro" id="IPR005823">
    <property type="entry name" value="Ribosomal_uL13_bac-type"/>
</dbReference>
<dbReference type="InterPro" id="IPR036899">
    <property type="entry name" value="Ribosomal_uL13_sf"/>
</dbReference>
<dbReference type="NCBIfam" id="TIGR01066">
    <property type="entry name" value="rplM_bact"/>
    <property type="match status" value="1"/>
</dbReference>
<dbReference type="PANTHER" id="PTHR11545:SF2">
    <property type="entry name" value="LARGE RIBOSOMAL SUBUNIT PROTEIN UL13M"/>
    <property type="match status" value="1"/>
</dbReference>
<dbReference type="PANTHER" id="PTHR11545">
    <property type="entry name" value="RIBOSOMAL PROTEIN L13"/>
    <property type="match status" value="1"/>
</dbReference>
<dbReference type="Pfam" id="PF00572">
    <property type="entry name" value="Ribosomal_L13"/>
    <property type="match status" value="1"/>
</dbReference>
<dbReference type="PIRSF" id="PIRSF002181">
    <property type="entry name" value="Ribosomal_L13"/>
    <property type="match status" value="1"/>
</dbReference>
<dbReference type="SUPFAM" id="SSF52161">
    <property type="entry name" value="Ribosomal protein L13"/>
    <property type="match status" value="1"/>
</dbReference>
<sequence length="144" mass="16437">MKTFMAKPQDIKNRKWYVLDAEGKVLGRLAAEAARILRGKHKPDFTPHVDTGDHVIVINAEKVVLTGKKLRDKKYIRHSGYPGGLKVMNYEKLMKTRPELAVEKAIVGMLPHNRLGSRMAKKLKVYRGPEHPHQAQKPEPWQAL</sequence>
<name>RL13_PELTS</name>
<evidence type="ECO:0000255" key="1">
    <source>
        <dbReference type="HAMAP-Rule" id="MF_01366"/>
    </source>
</evidence>
<evidence type="ECO:0000305" key="2"/>